<dbReference type="EMBL" id="CP001107">
    <property type="protein sequence ID" value="ACR76722.1"/>
    <property type="molecule type" value="Genomic_DNA"/>
</dbReference>
<dbReference type="RefSeq" id="WP_012743749.1">
    <property type="nucleotide sequence ID" value="NC_012781.1"/>
</dbReference>
<dbReference type="SMR" id="C4ZI85"/>
<dbReference type="STRING" id="515619.EUBREC_2994"/>
<dbReference type="PaxDb" id="515619-EUBREC_2994"/>
<dbReference type="GeneID" id="86989687"/>
<dbReference type="KEGG" id="ere:EUBREC_2994"/>
<dbReference type="HOGENOM" id="CLU_082184_2_2_9"/>
<dbReference type="Proteomes" id="UP000001477">
    <property type="component" value="Chromosome"/>
</dbReference>
<dbReference type="GO" id="GO:0022625">
    <property type="term" value="C:cytosolic large ribosomal subunit"/>
    <property type="evidence" value="ECO:0007669"/>
    <property type="project" value="TreeGrafter"/>
</dbReference>
<dbReference type="GO" id="GO:0003729">
    <property type="term" value="F:mRNA binding"/>
    <property type="evidence" value="ECO:0007669"/>
    <property type="project" value="TreeGrafter"/>
</dbReference>
<dbReference type="GO" id="GO:0003735">
    <property type="term" value="F:structural constituent of ribosome"/>
    <property type="evidence" value="ECO:0007669"/>
    <property type="project" value="InterPro"/>
</dbReference>
<dbReference type="GO" id="GO:0017148">
    <property type="term" value="P:negative regulation of translation"/>
    <property type="evidence" value="ECO:0007669"/>
    <property type="project" value="TreeGrafter"/>
</dbReference>
<dbReference type="GO" id="GO:0006412">
    <property type="term" value="P:translation"/>
    <property type="evidence" value="ECO:0007669"/>
    <property type="project" value="UniProtKB-UniRule"/>
</dbReference>
<dbReference type="CDD" id="cd00392">
    <property type="entry name" value="Ribosomal_L13"/>
    <property type="match status" value="1"/>
</dbReference>
<dbReference type="FunFam" id="3.90.1180.10:FF:000001">
    <property type="entry name" value="50S ribosomal protein L13"/>
    <property type="match status" value="1"/>
</dbReference>
<dbReference type="Gene3D" id="3.90.1180.10">
    <property type="entry name" value="Ribosomal protein L13"/>
    <property type="match status" value="1"/>
</dbReference>
<dbReference type="HAMAP" id="MF_01366">
    <property type="entry name" value="Ribosomal_uL13"/>
    <property type="match status" value="1"/>
</dbReference>
<dbReference type="InterPro" id="IPR005822">
    <property type="entry name" value="Ribosomal_uL13"/>
</dbReference>
<dbReference type="InterPro" id="IPR005823">
    <property type="entry name" value="Ribosomal_uL13_bac-type"/>
</dbReference>
<dbReference type="InterPro" id="IPR023563">
    <property type="entry name" value="Ribosomal_uL13_CS"/>
</dbReference>
<dbReference type="InterPro" id="IPR036899">
    <property type="entry name" value="Ribosomal_uL13_sf"/>
</dbReference>
<dbReference type="NCBIfam" id="TIGR01066">
    <property type="entry name" value="rplM_bact"/>
    <property type="match status" value="1"/>
</dbReference>
<dbReference type="PANTHER" id="PTHR11545:SF2">
    <property type="entry name" value="LARGE RIBOSOMAL SUBUNIT PROTEIN UL13M"/>
    <property type="match status" value="1"/>
</dbReference>
<dbReference type="PANTHER" id="PTHR11545">
    <property type="entry name" value="RIBOSOMAL PROTEIN L13"/>
    <property type="match status" value="1"/>
</dbReference>
<dbReference type="Pfam" id="PF00572">
    <property type="entry name" value="Ribosomal_L13"/>
    <property type="match status" value="1"/>
</dbReference>
<dbReference type="PIRSF" id="PIRSF002181">
    <property type="entry name" value="Ribosomal_L13"/>
    <property type="match status" value="1"/>
</dbReference>
<dbReference type="SUPFAM" id="SSF52161">
    <property type="entry name" value="Ribosomal protein L13"/>
    <property type="match status" value="1"/>
</dbReference>
<dbReference type="PROSITE" id="PS00783">
    <property type="entry name" value="RIBOSOMAL_L13"/>
    <property type="match status" value="1"/>
</dbReference>
<feature type="chain" id="PRO_1000214951" description="Large ribosomal subunit protein uL13">
    <location>
        <begin position="1"/>
        <end position="142"/>
    </location>
</feature>
<keyword id="KW-0687">Ribonucleoprotein</keyword>
<keyword id="KW-0689">Ribosomal protein</keyword>
<gene>
    <name evidence="1" type="primary">rplM</name>
    <name type="ordered locus">EUBREC_2994</name>
</gene>
<accession>C4ZI85</accession>
<protein>
    <recommendedName>
        <fullName evidence="1">Large ribosomal subunit protein uL13</fullName>
    </recommendedName>
    <alternativeName>
        <fullName evidence="2">50S ribosomal protein L13</fullName>
    </alternativeName>
</protein>
<name>RL13_AGARV</name>
<evidence type="ECO:0000255" key="1">
    <source>
        <dbReference type="HAMAP-Rule" id="MF_01366"/>
    </source>
</evidence>
<evidence type="ECO:0000305" key="2"/>
<proteinExistence type="inferred from homology"/>
<comment type="function">
    <text evidence="1">This protein is one of the early assembly proteins of the 50S ribosomal subunit, although it is not seen to bind rRNA by itself. It is important during the early stages of 50S assembly.</text>
</comment>
<comment type="subunit">
    <text evidence="1">Part of the 50S ribosomal subunit.</text>
</comment>
<comment type="similarity">
    <text evidence="1">Belongs to the universal ribosomal protein uL13 family.</text>
</comment>
<reference key="1">
    <citation type="journal article" date="2009" name="Proc. Natl. Acad. Sci. U.S.A.">
        <title>Characterizing a model human gut microbiota composed of members of its two dominant bacterial phyla.</title>
        <authorList>
            <person name="Mahowald M.A."/>
            <person name="Rey F.E."/>
            <person name="Seedorf H."/>
            <person name="Turnbaugh P.J."/>
            <person name="Fulton R.S."/>
            <person name="Wollam A."/>
            <person name="Shah N."/>
            <person name="Wang C."/>
            <person name="Magrini V."/>
            <person name="Wilson R.K."/>
            <person name="Cantarel B.L."/>
            <person name="Coutinho P.M."/>
            <person name="Henrissat B."/>
            <person name="Crock L.W."/>
            <person name="Russell A."/>
            <person name="Verberkmoes N.C."/>
            <person name="Hettich R.L."/>
            <person name="Gordon J.I."/>
        </authorList>
    </citation>
    <scope>NUCLEOTIDE SEQUENCE [LARGE SCALE GENOMIC DNA]</scope>
    <source>
        <strain>ATCC 33656 / DSM 3377 / JCM 17463 / KCTC 5835 / LMG 30912 / VPI 0990</strain>
    </source>
</reference>
<organism>
    <name type="scientific">Agathobacter rectalis (strain ATCC 33656 / DSM 3377 / JCM 17463 / KCTC 5835 / VPI 0990)</name>
    <name type="common">Eubacterium rectale</name>
    <dbReference type="NCBI Taxonomy" id="515619"/>
    <lineage>
        <taxon>Bacteria</taxon>
        <taxon>Bacillati</taxon>
        <taxon>Bacillota</taxon>
        <taxon>Clostridia</taxon>
        <taxon>Lachnospirales</taxon>
        <taxon>Lachnospiraceae</taxon>
        <taxon>Agathobacter</taxon>
    </lineage>
</organism>
<sequence>MKTFMASPATIDRKWYVVDAEGKTLGRLASEVAKVLRGKNKAIFTPHIDTGDYVIVVNADKVKVTGKKLDQKIYYHHSDYIGGMKETTLREMMNKHPERVIEYAVKGMLPKGPLGRQMYTKLFVYAGPDHKHAAQKPETLEF</sequence>